<reference key="1">
    <citation type="journal article" date="2007" name="J. Bacteriol.">
        <title>The genome sequence of avian pathogenic Escherichia coli strain O1:K1:H7 shares strong similarities with human extraintestinal pathogenic E. coli genomes.</title>
        <authorList>
            <person name="Johnson T.J."/>
            <person name="Kariyawasam S."/>
            <person name="Wannemuehler Y."/>
            <person name="Mangiamele P."/>
            <person name="Johnson S.J."/>
            <person name="Doetkott C."/>
            <person name="Skyberg J.A."/>
            <person name="Lynne A.M."/>
            <person name="Johnson J.R."/>
            <person name="Nolan L.K."/>
        </authorList>
    </citation>
    <scope>NUCLEOTIDE SEQUENCE [LARGE SCALE GENOMIC DNA]</scope>
</reference>
<dbReference type="EC" id="2.5.1.16" evidence="1"/>
<dbReference type="EMBL" id="CP000468">
    <property type="protein sequence ID" value="ABI99606.1"/>
    <property type="molecule type" value="Genomic_DNA"/>
</dbReference>
<dbReference type="RefSeq" id="WP_000818405.1">
    <property type="nucleotide sequence ID" value="NZ_CADILS010000047.1"/>
</dbReference>
<dbReference type="SMR" id="A1A7G7"/>
<dbReference type="KEGG" id="ecv:APECO1_1864"/>
<dbReference type="HOGENOM" id="CLU_048199_0_0_6"/>
<dbReference type="UniPathway" id="UPA00248">
    <property type="reaction ID" value="UER00314"/>
</dbReference>
<dbReference type="Proteomes" id="UP000008216">
    <property type="component" value="Chromosome"/>
</dbReference>
<dbReference type="GO" id="GO:0005829">
    <property type="term" value="C:cytosol"/>
    <property type="evidence" value="ECO:0007669"/>
    <property type="project" value="TreeGrafter"/>
</dbReference>
<dbReference type="GO" id="GO:0004766">
    <property type="term" value="F:spermidine synthase activity"/>
    <property type="evidence" value="ECO:0007669"/>
    <property type="project" value="UniProtKB-UniRule"/>
</dbReference>
<dbReference type="GO" id="GO:0008295">
    <property type="term" value="P:spermidine biosynthetic process"/>
    <property type="evidence" value="ECO:0007669"/>
    <property type="project" value="UniProtKB-UniRule"/>
</dbReference>
<dbReference type="CDD" id="cd02440">
    <property type="entry name" value="AdoMet_MTases"/>
    <property type="match status" value="1"/>
</dbReference>
<dbReference type="FunFam" id="2.30.140.10:FF:000002">
    <property type="entry name" value="Polyamine aminopropyltransferase"/>
    <property type="match status" value="1"/>
</dbReference>
<dbReference type="FunFam" id="3.40.50.150:FF:000026">
    <property type="entry name" value="Polyamine aminopropyltransferase"/>
    <property type="match status" value="1"/>
</dbReference>
<dbReference type="Gene3D" id="2.30.140.10">
    <property type="entry name" value="Spermidine synthase, tetramerisation domain"/>
    <property type="match status" value="1"/>
</dbReference>
<dbReference type="Gene3D" id="3.40.50.150">
    <property type="entry name" value="Vaccinia Virus protein VP39"/>
    <property type="match status" value="1"/>
</dbReference>
<dbReference type="HAMAP" id="MF_00198">
    <property type="entry name" value="Spermidine_synth"/>
    <property type="match status" value="1"/>
</dbReference>
<dbReference type="InterPro" id="IPR030374">
    <property type="entry name" value="PABS"/>
</dbReference>
<dbReference type="InterPro" id="IPR030373">
    <property type="entry name" value="PABS_CS"/>
</dbReference>
<dbReference type="InterPro" id="IPR029063">
    <property type="entry name" value="SAM-dependent_MTases_sf"/>
</dbReference>
<dbReference type="InterPro" id="IPR001045">
    <property type="entry name" value="Spermi_synthase"/>
</dbReference>
<dbReference type="InterPro" id="IPR035246">
    <property type="entry name" value="Spermidine_synt_N"/>
</dbReference>
<dbReference type="InterPro" id="IPR037163">
    <property type="entry name" value="Spermidine_synt_N_sf"/>
</dbReference>
<dbReference type="NCBIfam" id="NF037959">
    <property type="entry name" value="MFS_SpdSyn"/>
    <property type="match status" value="1"/>
</dbReference>
<dbReference type="NCBIfam" id="NF002010">
    <property type="entry name" value="PRK00811.1"/>
    <property type="match status" value="1"/>
</dbReference>
<dbReference type="NCBIfam" id="TIGR00417">
    <property type="entry name" value="speE"/>
    <property type="match status" value="1"/>
</dbReference>
<dbReference type="PANTHER" id="PTHR11558:SF11">
    <property type="entry name" value="SPERMIDINE SYNTHASE"/>
    <property type="match status" value="1"/>
</dbReference>
<dbReference type="PANTHER" id="PTHR11558">
    <property type="entry name" value="SPERMIDINE/SPERMINE SYNTHASE"/>
    <property type="match status" value="1"/>
</dbReference>
<dbReference type="Pfam" id="PF17284">
    <property type="entry name" value="Spermine_synt_N"/>
    <property type="match status" value="1"/>
</dbReference>
<dbReference type="Pfam" id="PF01564">
    <property type="entry name" value="Spermine_synth"/>
    <property type="match status" value="1"/>
</dbReference>
<dbReference type="SUPFAM" id="SSF53335">
    <property type="entry name" value="S-adenosyl-L-methionine-dependent methyltransferases"/>
    <property type="match status" value="1"/>
</dbReference>
<dbReference type="PROSITE" id="PS01330">
    <property type="entry name" value="PABS_1"/>
    <property type="match status" value="1"/>
</dbReference>
<dbReference type="PROSITE" id="PS51006">
    <property type="entry name" value="PABS_2"/>
    <property type="match status" value="1"/>
</dbReference>
<accession>A1A7G7</accession>
<protein>
    <recommendedName>
        <fullName evidence="1">Polyamine aminopropyltransferase</fullName>
    </recommendedName>
    <alternativeName>
        <fullName evidence="1">Putrescine aminopropyltransferase</fullName>
        <shortName evidence="1">PAPT</shortName>
    </alternativeName>
    <alternativeName>
        <fullName evidence="1">Spermidine synthase</fullName>
        <shortName evidence="1">SPDS</shortName>
        <shortName evidence="1">SPDSY</shortName>
        <ecNumber evidence="1">2.5.1.16</ecNumber>
    </alternativeName>
</protein>
<sequence length="288" mass="32334">MAEKKQWHETLHDQFGQYFAVDNVLYHEKTDHQDLIIFENAAFGRVMALDGVVQTTERDEFIYHEMMTHVPLLAHGHAKHVLIIGGGDGAMLREVTRHKNVESITMVEIDAGVVSFCRQYLPNHNAGSYDDPRFKLVIDDGVNFVNQTNQTFDVIISDCTDPIGPGESLFTSAFYEGCKRCLNPGGIFVAQNGVCFLQQEEAIDSHRKLSHYFSDVGFYQAAIPTYYGGIMTFAWATDNDALRHLSTEIIQARFLASGLKCRYYNPAVHTAAFALPQYLQDALASQPS</sequence>
<comment type="function">
    <text evidence="1">Catalyzes the irreversible transfer of a propylamine group from the amino donor S-adenosylmethioninamine (decarboxy-AdoMet) to putrescine (1,4-diaminobutane) to yield spermidine.</text>
</comment>
<comment type="catalytic activity">
    <reaction evidence="1">
        <text>S-adenosyl 3-(methylsulfanyl)propylamine + putrescine = S-methyl-5'-thioadenosine + spermidine + H(+)</text>
        <dbReference type="Rhea" id="RHEA:12721"/>
        <dbReference type="ChEBI" id="CHEBI:15378"/>
        <dbReference type="ChEBI" id="CHEBI:17509"/>
        <dbReference type="ChEBI" id="CHEBI:57443"/>
        <dbReference type="ChEBI" id="CHEBI:57834"/>
        <dbReference type="ChEBI" id="CHEBI:326268"/>
        <dbReference type="EC" id="2.5.1.16"/>
    </reaction>
</comment>
<comment type="pathway">
    <text evidence="1">Amine and polyamine biosynthesis; spermidine biosynthesis; spermidine from putrescine: step 1/1.</text>
</comment>
<comment type="subunit">
    <text evidence="1">Homodimer or homotetramer.</text>
</comment>
<comment type="subcellular location">
    <subcellularLocation>
        <location evidence="1">Cytoplasm</location>
    </subcellularLocation>
</comment>
<comment type="similarity">
    <text evidence="1">Belongs to the spermidine/spermine synthase family.</text>
</comment>
<gene>
    <name evidence="1" type="primary">speE</name>
    <name type="ordered locus">Ecok1_01130</name>
    <name type="ORF">APECO1_1864</name>
</gene>
<proteinExistence type="inferred from homology"/>
<evidence type="ECO:0000255" key="1">
    <source>
        <dbReference type="HAMAP-Rule" id="MF_00198"/>
    </source>
</evidence>
<organism>
    <name type="scientific">Escherichia coli O1:K1 / APEC</name>
    <dbReference type="NCBI Taxonomy" id="405955"/>
    <lineage>
        <taxon>Bacteria</taxon>
        <taxon>Pseudomonadati</taxon>
        <taxon>Pseudomonadota</taxon>
        <taxon>Gammaproteobacteria</taxon>
        <taxon>Enterobacterales</taxon>
        <taxon>Enterobacteriaceae</taxon>
        <taxon>Escherichia</taxon>
    </lineage>
</organism>
<feature type="chain" id="PRO_1000011997" description="Polyamine aminopropyltransferase">
    <location>
        <begin position="1"/>
        <end position="288"/>
    </location>
</feature>
<feature type="domain" description="PABS" evidence="1">
    <location>
        <begin position="9"/>
        <end position="238"/>
    </location>
</feature>
<feature type="active site" description="Proton acceptor" evidence="1">
    <location>
        <position position="158"/>
    </location>
</feature>
<feature type="binding site" evidence="1">
    <location>
        <position position="33"/>
    </location>
    <ligand>
        <name>S-methyl-5'-thioadenosine</name>
        <dbReference type="ChEBI" id="CHEBI:17509"/>
    </ligand>
</feature>
<feature type="binding site" evidence="1">
    <location>
        <position position="64"/>
    </location>
    <ligand>
        <name>spermidine</name>
        <dbReference type="ChEBI" id="CHEBI:57834"/>
    </ligand>
</feature>
<feature type="binding site" evidence="1">
    <location>
        <position position="88"/>
    </location>
    <ligand>
        <name>spermidine</name>
        <dbReference type="ChEBI" id="CHEBI:57834"/>
    </ligand>
</feature>
<feature type="binding site" evidence="1">
    <location>
        <position position="108"/>
    </location>
    <ligand>
        <name>S-methyl-5'-thioadenosine</name>
        <dbReference type="ChEBI" id="CHEBI:17509"/>
    </ligand>
</feature>
<feature type="binding site" evidence="1">
    <location>
        <begin position="140"/>
        <end position="141"/>
    </location>
    <ligand>
        <name>S-methyl-5'-thioadenosine</name>
        <dbReference type="ChEBI" id="CHEBI:17509"/>
    </ligand>
</feature>
<feature type="binding site" evidence="1">
    <location>
        <begin position="158"/>
        <end position="161"/>
    </location>
    <ligand>
        <name>spermidine</name>
        <dbReference type="ChEBI" id="CHEBI:57834"/>
    </ligand>
</feature>
<feature type="binding site" evidence="1">
    <location>
        <position position="165"/>
    </location>
    <ligand>
        <name>S-methyl-5'-thioadenosine</name>
        <dbReference type="ChEBI" id="CHEBI:17509"/>
    </ligand>
</feature>
<name>SPEE_ECOK1</name>
<keyword id="KW-0963">Cytoplasm</keyword>
<keyword id="KW-0620">Polyamine biosynthesis</keyword>
<keyword id="KW-1185">Reference proteome</keyword>
<keyword id="KW-0745">Spermidine biosynthesis</keyword>
<keyword id="KW-0808">Transferase</keyword>